<comment type="function">
    <text evidence="1">IF-3 binds to the 30S ribosomal subunit and shifts the equilibrium between 70S ribosomes and their 50S and 30S subunits in favor of the free subunits, thus enhancing the availability of 30S subunits on which protein synthesis initiation begins.</text>
</comment>
<comment type="subunit">
    <text evidence="1">Monomer.</text>
</comment>
<comment type="subcellular location">
    <subcellularLocation>
        <location evidence="1">Cytoplasm</location>
    </subcellularLocation>
</comment>
<comment type="similarity">
    <text evidence="1">Belongs to the IF-3 family.</text>
</comment>
<feature type="chain" id="PRO_1000092776" description="Translation initiation factor IF-3">
    <location>
        <begin position="1"/>
        <end position="187"/>
    </location>
</feature>
<organism>
    <name type="scientific">Leptospira biflexa serovar Patoc (strain Patoc 1 / ATCC 23582 / Paris)</name>
    <dbReference type="NCBI Taxonomy" id="456481"/>
    <lineage>
        <taxon>Bacteria</taxon>
        <taxon>Pseudomonadati</taxon>
        <taxon>Spirochaetota</taxon>
        <taxon>Spirochaetia</taxon>
        <taxon>Leptospirales</taxon>
        <taxon>Leptospiraceae</taxon>
        <taxon>Leptospira</taxon>
    </lineage>
</organism>
<accession>B0SKZ7</accession>
<dbReference type="EMBL" id="CP000786">
    <property type="protein sequence ID" value="ABZ98490.1"/>
    <property type="molecule type" value="Genomic_DNA"/>
</dbReference>
<dbReference type="RefSeq" id="WP_012389351.1">
    <property type="nucleotide sequence ID" value="NC_010602.1"/>
</dbReference>
<dbReference type="SMR" id="B0SKZ7"/>
<dbReference type="STRING" id="456481.LEPBI_I2400"/>
<dbReference type="KEGG" id="lbi:LEPBI_I2400"/>
<dbReference type="HOGENOM" id="CLU_054919_3_2_12"/>
<dbReference type="OrthoDB" id="9806014at2"/>
<dbReference type="BioCyc" id="LBIF456481:LEPBI_RS11850-MONOMER"/>
<dbReference type="Proteomes" id="UP000001847">
    <property type="component" value="Chromosome I"/>
</dbReference>
<dbReference type="GO" id="GO:0005829">
    <property type="term" value="C:cytosol"/>
    <property type="evidence" value="ECO:0007669"/>
    <property type="project" value="TreeGrafter"/>
</dbReference>
<dbReference type="GO" id="GO:0016020">
    <property type="term" value="C:membrane"/>
    <property type="evidence" value="ECO:0007669"/>
    <property type="project" value="TreeGrafter"/>
</dbReference>
<dbReference type="GO" id="GO:0043022">
    <property type="term" value="F:ribosome binding"/>
    <property type="evidence" value="ECO:0007669"/>
    <property type="project" value="TreeGrafter"/>
</dbReference>
<dbReference type="GO" id="GO:0003743">
    <property type="term" value="F:translation initiation factor activity"/>
    <property type="evidence" value="ECO:0007669"/>
    <property type="project" value="UniProtKB-UniRule"/>
</dbReference>
<dbReference type="GO" id="GO:0032790">
    <property type="term" value="P:ribosome disassembly"/>
    <property type="evidence" value="ECO:0007669"/>
    <property type="project" value="TreeGrafter"/>
</dbReference>
<dbReference type="FunFam" id="3.30.110.10:FF:000001">
    <property type="entry name" value="Translation initiation factor IF-3"/>
    <property type="match status" value="1"/>
</dbReference>
<dbReference type="Gene3D" id="3.30.110.10">
    <property type="entry name" value="Translation initiation factor 3 (IF-3), C-terminal domain"/>
    <property type="match status" value="1"/>
</dbReference>
<dbReference type="Gene3D" id="3.10.20.80">
    <property type="entry name" value="Translation initiation factor 3 (IF-3), N-terminal domain"/>
    <property type="match status" value="1"/>
</dbReference>
<dbReference type="HAMAP" id="MF_00080">
    <property type="entry name" value="IF_3"/>
    <property type="match status" value="1"/>
</dbReference>
<dbReference type="InterPro" id="IPR036788">
    <property type="entry name" value="T_IF-3_C_sf"/>
</dbReference>
<dbReference type="InterPro" id="IPR036787">
    <property type="entry name" value="T_IF-3_N_sf"/>
</dbReference>
<dbReference type="InterPro" id="IPR019813">
    <property type="entry name" value="Translation_initiation_fac3_CS"/>
</dbReference>
<dbReference type="InterPro" id="IPR001288">
    <property type="entry name" value="Translation_initiation_fac_3"/>
</dbReference>
<dbReference type="InterPro" id="IPR019815">
    <property type="entry name" value="Translation_initiation_fac_3_C"/>
</dbReference>
<dbReference type="InterPro" id="IPR019814">
    <property type="entry name" value="Translation_initiation_fac_3_N"/>
</dbReference>
<dbReference type="NCBIfam" id="TIGR00168">
    <property type="entry name" value="infC"/>
    <property type="match status" value="1"/>
</dbReference>
<dbReference type="PANTHER" id="PTHR10938">
    <property type="entry name" value="TRANSLATION INITIATION FACTOR IF-3"/>
    <property type="match status" value="1"/>
</dbReference>
<dbReference type="PANTHER" id="PTHR10938:SF0">
    <property type="entry name" value="TRANSLATION INITIATION FACTOR IF-3, MITOCHONDRIAL"/>
    <property type="match status" value="1"/>
</dbReference>
<dbReference type="Pfam" id="PF00707">
    <property type="entry name" value="IF3_C"/>
    <property type="match status" value="1"/>
</dbReference>
<dbReference type="Pfam" id="PF05198">
    <property type="entry name" value="IF3_N"/>
    <property type="match status" value="1"/>
</dbReference>
<dbReference type="SUPFAM" id="SSF55200">
    <property type="entry name" value="Translation initiation factor IF3, C-terminal domain"/>
    <property type="match status" value="1"/>
</dbReference>
<dbReference type="SUPFAM" id="SSF54364">
    <property type="entry name" value="Translation initiation factor IF3, N-terminal domain"/>
    <property type="match status" value="1"/>
</dbReference>
<dbReference type="PROSITE" id="PS00938">
    <property type="entry name" value="IF3"/>
    <property type="match status" value="1"/>
</dbReference>
<gene>
    <name evidence="1" type="primary">infC</name>
    <name type="ordered locus">LEPBI_I2400</name>
</gene>
<proteinExistence type="inferred from homology"/>
<keyword id="KW-0963">Cytoplasm</keyword>
<keyword id="KW-0396">Initiation factor</keyword>
<keyword id="KW-0648">Protein biosynthesis</keyword>
<keyword id="KW-1185">Reference proteome</keyword>
<sequence>MQKRPNPRGNPNQDKFAHIRINEQITNVASIRLVSDEGSDIVTLDEALRRAKEANLDLVEVSGDQDVHVCKLIDFGKYKFELLKKTKEAKKKQHVVTVKEIKIRPRIDNHDFEIKKRHALEFLQKGDKVKVTLRFRGREMVHSEIGMNIVNRFVEDLKEHASPEKMPVHDGKTIVVVMNPIGEKPKG</sequence>
<evidence type="ECO:0000255" key="1">
    <source>
        <dbReference type="HAMAP-Rule" id="MF_00080"/>
    </source>
</evidence>
<protein>
    <recommendedName>
        <fullName evidence="1">Translation initiation factor IF-3</fullName>
    </recommendedName>
</protein>
<name>IF3_LEPBP</name>
<reference key="1">
    <citation type="journal article" date="2008" name="PLoS ONE">
        <title>Genome sequence of the saprophyte Leptospira biflexa provides insights into the evolution of Leptospira and the pathogenesis of leptospirosis.</title>
        <authorList>
            <person name="Picardeau M."/>
            <person name="Bulach D.M."/>
            <person name="Bouchier C."/>
            <person name="Zuerner R.L."/>
            <person name="Zidane N."/>
            <person name="Wilson P.J."/>
            <person name="Creno S."/>
            <person name="Kuczek E.S."/>
            <person name="Bommezzadri S."/>
            <person name="Davis J.C."/>
            <person name="McGrath A."/>
            <person name="Johnson M.J."/>
            <person name="Boursaux-Eude C."/>
            <person name="Seemann T."/>
            <person name="Rouy Z."/>
            <person name="Coppel R.L."/>
            <person name="Rood J.I."/>
            <person name="Lajus A."/>
            <person name="Davies J.K."/>
            <person name="Medigue C."/>
            <person name="Adler B."/>
        </authorList>
    </citation>
    <scope>NUCLEOTIDE SEQUENCE [LARGE SCALE GENOMIC DNA]</scope>
    <source>
        <strain>Patoc 1 / ATCC 23582 / Paris</strain>
    </source>
</reference>